<gene>
    <name type="ordered locus">OB3336</name>
</gene>
<keyword id="KW-0238">DNA-binding</keyword>
<keyword id="KW-0489">Methyltransferase</keyword>
<keyword id="KW-1185">Reference proteome</keyword>
<keyword id="KW-0680">Restriction system</keyword>
<keyword id="KW-0949">S-adenosyl-L-methionine</keyword>
<keyword id="KW-0808">Transferase</keyword>
<dbReference type="EC" id="2.1.1.37"/>
<dbReference type="EMBL" id="BA000028">
    <property type="protein sequence ID" value="BAC15292.1"/>
    <property type="molecule type" value="Genomic_DNA"/>
</dbReference>
<dbReference type="RefSeq" id="WP_011067734.1">
    <property type="nucleotide sequence ID" value="NC_004193.1"/>
</dbReference>
<dbReference type="SMR" id="Q8EL95"/>
<dbReference type="STRING" id="221109.gene:10735588"/>
<dbReference type="REBASE" id="11861">
    <property type="entry name" value="M.Ret42ORF108P"/>
</dbReference>
<dbReference type="REBASE" id="203433">
    <property type="entry name" value="M.Bam1267ORF4054P"/>
</dbReference>
<dbReference type="REBASE" id="6390">
    <property type="entry name" value="M.OihORF3336P"/>
</dbReference>
<dbReference type="KEGG" id="oih:OB3336"/>
<dbReference type="eggNOG" id="COG0270">
    <property type="taxonomic scope" value="Bacteria"/>
</dbReference>
<dbReference type="HOGENOM" id="CLU_006958_2_4_9"/>
<dbReference type="OrthoDB" id="9813719at2"/>
<dbReference type="PhylomeDB" id="Q8EL95"/>
<dbReference type="PRO" id="PR:Q8EL95"/>
<dbReference type="Proteomes" id="UP000000822">
    <property type="component" value="Chromosome"/>
</dbReference>
<dbReference type="GO" id="GO:0003886">
    <property type="term" value="F:DNA (cytosine-5-)-methyltransferase activity"/>
    <property type="evidence" value="ECO:0007669"/>
    <property type="project" value="UniProtKB-EC"/>
</dbReference>
<dbReference type="GO" id="GO:0003677">
    <property type="term" value="F:DNA binding"/>
    <property type="evidence" value="ECO:0007669"/>
    <property type="project" value="UniProtKB-KW"/>
</dbReference>
<dbReference type="GO" id="GO:0009307">
    <property type="term" value="P:DNA restriction-modification system"/>
    <property type="evidence" value="ECO:0007669"/>
    <property type="project" value="UniProtKB-KW"/>
</dbReference>
<dbReference type="GO" id="GO:0032259">
    <property type="term" value="P:methylation"/>
    <property type="evidence" value="ECO:0007669"/>
    <property type="project" value="UniProtKB-KW"/>
</dbReference>
<dbReference type="GO" id="GO:0044027">
    <property type="term" value="P:negative regulation of gene expression via chromosomal CpG island methylation"/>
    <property type="evidence" value="ECO:0007669"/>
    <property type="project" value="TreeGrafter"/>
</dbReference>
<dbReference type="Gene3D" id="3.90.120.10">
    <property type="entry name" value="DNA Methylase, subunit A, domain 2"/>
    <property type="match status" value="1"/>
</dbReference>
<dbReference type="Gene3D" id="3.40.50.150">
    <property type="entry name" value="Vaccinia Virus protein VP39"/>
    <property type="match status" value="1"/>
</dbReference>
<dbReference type="InterPro" id="IPR050390">
    <property type="entry name" value="C5-Methyltransferase"/>
</dbReference>
<dbReference type="InterPro" id="IPR001525">
    <property type="entry name" value="C5_MeTfrase"/>
</dbReference>
<dbReference type="InterPro" id="IPR031303">
    <property type="entry name" value="C5_meth_CS"/>
</dbReference>
<dbReference type="InterPro" id="IPR029063">
    <property type="entry name" value="SAM-dependent_MTases_sf"/>
</dbReference>
<dbReference type="NCBIfam" id="TIGR00675">
    <property type="entry name" value="dcm"/>
    <property type="match status" value="1"/>
</dbReference>
<dbReference type="PANTHER" id="PTHR10629">
    <property type="entry name" value="CYTOSINE-SPECIFIC METHYLTRANSFERASE"/>
    <property type="match status" value="1"/>
</dbReference>
<dbReference type="PANTHER" id="PTHR10629:SF52">
    <property type="entry name" value="DNA (CYTOSINE-5)-METHYLTRANSFERASE 1"/>
    <property type="match status" value="1"/>
</dbReference>
<dbReference type="Pfam" id="PF00145">
    <property type="entry name" value="DNA_methylase"/>
    <property type="match status" value="1"/>
</dbReference>
<dbReference type="PRINTS" id="PR00105">
    <property type="entry name" value="C5METTRFRASE"/>
</dbReference>
<dbReference type="SUPFAM" id="SSF53335">
    <property type="entry name" value="S-adenosyl-L-methionine-dependent methyltransferases"/>
    <property type="match status" value="1"/>
</dbReference>
<dbReference type="PROSITE" id="PS00095">
    <property type="entry name" value="C5_MTASE_2"/>
    <property type="match status" value="1"/>
</dbReference>
<dbReference type="PROSITE" id="PS51679">
    <property type="entry name" value="SAM_MT_C5"/>
    <property type="match status" value="1"/>
</dbReference>
<name>MT36_OCEIH</name>
<organism>
    <name type="scientific">Oceanobacillus iheyensis (strain DSM 14371 / CIP 107618 / JCM 11309 / KCTC 3954 / HTE831)</name>
    <dbReference type="NCBI Taxonomy" id="221109"/>
    <lineage>
        <taxon>Bacteria</taxon>
        <taxon>Bacillati</taxon>
        <taxon>Bacillota</taxon>
        <taxon>Bacilli</taxon>
        <taxon>Bacillales</taxon>
        <taxon>Bacillaceae</taxon>
        <taxon>Oceanobacillus</taxon>
    </lineage>
</organism>
<reference key="1">
    <citation type="journal article" date="2002" name="Nucleic Acids Res.">
        <title>Genome sequence of Oceanobacillus iheyensis isolated from the Iheya Ridge and its unexpected adaptive capabilities to extreme environments.</title>
        <authorList>
            <person name="Takami H."/>
            <person name="Takaki Y."/>
            <person name="Uchiyama I."/>
        </authorList>
    </citation>
    <scope>NUCLEOTIDE SEQUENCE [LARGE SCALE GENOMIC DNA]</scope>
    <source>
        <strain>DSM 14371 / CIP 107618 / JCM 11309 / KCTC 3954 / HTE831</strain>
    </source>
</reference>
<reference key="2">
    <citation type="journal article" date="2003" name="Nucleic Acids Res.">
        <title>A nomenclature for restriction enzymes, DNA methyltransferases, homing endonucleases and their genes.</title>
        <authorList>
            <person name="Roberts R.J."/>
            <person name="Belfort M."/>
            <person name="Bestor T."/>
            <person name="Bhagwat A.S."/>
            <person name="Bickle T.A."/>
            <person name="Bitinaite J."/>
            <person name="Blumenthal R.M."/>
            <person name="Degtyarev S.K."/>
            <person name="Dryden D.T."/>
            <person name="Dybvig K."/>
            <person name="Firman K."/>
            <person name="Gromova E.S."/>
            <person name="Gumport R.I."/>
            <person name="Halford S.E."/>
            <person name="Hattman S."/>
            <person name="Heitman J."/>
            <person name="Hornby D.P."/>
            <person name="Janulaitis A."/>
            <person name="Jeltsch A."/>
            <person name="Josephsen J."/>
            <person name="Kiss A."/>
            <person name="Klaenhammer T.R."/>
            <person name="Kobayashi I."/>
            <person name="Kong H."/>
            <person name="Krueger D.H."/>
            <person name="Lacks S."/>
            <person name="Marinus M.G."/>
            <person name="Miyahara M."/>
            <person name="Morgan R.D."/>
            <person name="Murray N.E."/>
            <person name="Nagaraja V."/>
            <person name="Piekarowicz A."/>
            <person name="Pingoud A."/>
            <person name="Raleigh E."/>
            <person name="Rao D.N."/>
            <person name="Reich N."/>
            <person name="Repin V.E."/>
            <person name="Selker E.U."/>
            <person name="Shaw P.C."/>
            <person name="Stein D.C."/>
            <person name="Stoddard B.L."/>
            <person name="Szybalski W."/>
            <person name="Trautner T.A."/>
            <person name="Van Etten J.L."/>
            <person name="Vitor J.M."/>
            <person name="Wilson G.G."/>
            <person name="Xu S.Y."/>
        </authorList>
    </citation>
    <scope>NOMENCLATURE</scope>
</reference>
<accession>Q8EL95</accession>
<comment type="function">
    <text evidence="2">A methylase, recognizes the double-stranded sequence 5'-ACCGGT-3', methylates C-? on both strands. No endonuclease has been identified for this methylase.</text>
</comment>
<comment type="catalytic activity">
    <reaction>
        <text>a 2'-deoxycytidine in DNA + S-adenosyl-L-methionine = a 5-methyl-2'-deoxycytidine in DNA + S-adenosyl-L-homocysteine + H(+)</text>
        <dbReference type="Rhea" id="RHEA:13681"/>
        <dbReference type="Rhea" id="RHEA-COMP:11369"/>
        <dbReference type="Rhea" id="RHEA-COMP:11370"/>
        <dbReference type="ChEBI" id="CHEBI:15378"/>
        <dbReference type="ChEBI" id="CHEBI:57856"/>
        <dbReference type="ChEBI" id="CHEBI:59789"/>
        <dbReference type="ChEBI" id="CHEBI:85452"/>
        <dbReference type="ChEBI" id="CHEBI:85454"/>
        <dbReference type="EC" id="2.1.1.37"/>
    </reaction>
</comment>
<comment type="similarity">
    <text evidence="1">Belongs to the class I-like SAM-binding methyltransferase superfamily. C5-methyltransferase family.</text>
</comment>
<proteinExistence type="inferred from homology"/>
<protein>
    <recommendedName>
        <fullName evidence="2">Putative type II methyltransferase M.OihORF3336P</fullName>
        <shortName evidence="2">M.OihORF3336P</shortName>
        <ecNumber>2.1.1.37</ecNumber>
    </recommendedName>
    <alternativeName>
        <fullName>Cytosine-specific methyltransferase</fullName>
    </alternativeName>
    <alternativeName>
        <fullName>Putative modification methylase OB3336</fullName>
    </alternativeName>
</protein>
<sequence>MHQIYSATSTDKKLPEVVDLFSGCGGLALGFQLAGFNIRKGIELDRDASDVASFNLHWRQGKHDRHLNNDITLLSANEFYNDLDRKNDLIVIGGPPCQAYSKIGRAKLKSLGEERRQENDARGKLYENFLDYALHVDANVIVMENVPEAVNYGGVNIPDTVCDILINKGYDAIWTVLNAADFGVPQTRVRLFVMAIKKDIGKIKFIPEPTHKPHINVKRQSVNVRWMQSEIRNSKYYKQPNIPDETLSDWVTVGDAIGDLPNLFPVYNQKYKNYKPMMMKEYKSPPQNTFQKLMRINNKVDKVTGNMFRNTKRDFSIFDKMEEGDNYLDAHNIAMSLLRKEMRKSGITKENEFEYRLLKDRIVPPYSTEKFVEKWRKLSSDKPSHTLVAHLSTDTYSHLHPREPRGISVREAARLQSFPDDFLFDCSMGAAFKQIGNAVPPLLAKAIAEAMKKNIQGGCI</sequence>
<evidence type="ECO:0000255" key="1">
    <source>
        <dbReference type="PROSITE-ProRule" id="PRU01016"/>
    </source>
</evidence>
<evidence type="ECO:0000303" key="2">
    <source>
    </source>
</evidence>
<feature type="chain" id="PRO_0000087915" description="Putative type II methyltransferase M.OihORF3336P">
    <location>
        <begin position="1"/>
        <end position="460"/>
    </location>
</feature>
<feature type="domain" description="SAM-dependent MTase C5-type" evidence="1">
    <location>
        <begin position="15"/>
        <end position="458"/>
    </location>
</feature>
<feature type="active site" evidence="1">
    <location>
        <position position="97"/>
    </location>
</feature>